<accession>P34293</accession>
<gene>
    <name type="ORF">C05B5.5</name>
</gene>
<organism>
    <name type="scientific">Caenorhabditis elegans</name>
    <dbReference type="NCBI Taxonomy" id="6239"/>
    <lineage>
        <taxon>Eukaryota</taxon>
        <taxon>Metazoa</taxon>
        <taxon>Ecdysozoa</taxon>
        <taxon>Nematoda</taxon>
        <taxon>Chromadorea</taxon>
        <taxon>Rhabditida</taxon>
        <taxon>Rhabditina</taxon>
        <taxon>Rhabditomorpha</taxon>
        <taxon>Rhabditoidea</taxon>
        <taxon>Rhabditidae</taxon>
        <taxon>Peloderinae</taxon>
        <taxon>Caenorhabditis</taxon>
    </lineage>
</organism>
<evidence type="ECO:0000255" key="1">
    <source>
        <dbReference type="PROSITE-ProRule" id="PRU00080"/>
    </source>
</evidence>
<keyword id="KW-1185">Reference proteome</keyword>
<keyword id="KW-0833">Ubl conjugation pathway</keyword>
<proteinExistence type="predicted"/>
<feature type="chain" id="PRO_0000119979" description="Uncharacterized F-box protein C05B5.5">
    <location>
        <begin position="1"/>
        <end position="337"/>
    </location>
</feature>
<feature type="domain" description="F-box" evidence="1">
    <location>
        <begin position="12"/>
        <end position="60"/>
    </location>
</feature>
<protein>
    <recommendedName>
        <fullName>Uncharacterized F-box protein C05B5.5</fullName>
    </recommendedName>
</protein>
<reference key="1">
    <citation type="journal article" date="1998" name="Science">
        <title>Genome sequence of the nematode C. elegans: a platform for investigating biology.</title>
        <authorList>
            <consortium name="The C. elegans sequencing consortium"/>
        </authorList>
    </citation>
    <scope>NUCLEOTIDE SEQUENCE [LARGE SCALE GENOMIC DNA]</scope>
    <source>
        <strain>Bristol N2</strain>
    </source>
</reference>
<sequence length="337" mass="40214">MGQYLTKTEESSLNYVDLPDTVHRKIFEYLNPWEIFKLSRISKAIHVTILKNKKFAVKDIDLCTDENILKFQFQFVNNIVLSWEFYNLHEKPYFTSQFSNRCQYRQQYDIKNYYENPEEAFLFAFRNALSIFNVQNSKLKRFYLAPSKLELFFKLPYSFIDGRNCENLSIWNKKANDEDERDFSINFAKAVLEKMGVVRNLRLLFNCSTKDNEFDCEKEYYNSETDKLMPNDWYLYNKFDDIDLNVFLKNWLNFRDPLIRKFRIRGKRNFNTAIIFDGIETIPWDQRNGLNVYYYSATANDTGSLIFQANENHAIVKVGAINGNESSGYMEFLFITF</sequence>
<dbReference type="EMBL" id="Z32679">
    <property type="protein sequence ID" value="CAA83593.3"/>
    <property type="molecule type" value="Genomic_DNA"/>
</dbReference>
<dbReference type="PIR" id="E88571">
    <property type="entry name" value="E88571"/>
</dbReference>
<dbReference type="PIR" id="S43572">
    <property type="entry name" value="S43572"/>
</dbReference>
<dbReference type="RefSeq" id="NP_499219.3">
    <property type="nucleotide sequence ID" value="NM_066818.5"/>
</dbReference>
<dbReference type="FunCoup" id="P34293">
    <property type="interactions" value="3"/>
</dbReference>
<dbReference type="STRING" id="6239.C05B5.5a.1"/>
<dbReference type="PaxDb" id="6239-C05B5.5"/>
<dbReference type="EnsemblMetazoa" id="C05B5.5a.1">
    <property type="protein sequence ID" value="C05B5.5a.1"/>
    <property type="gene ID" value="WBGene00007322"/>
</dbReference>
<dbReference type="EnsemblMetazoa" id="C05B5.5a.2">
    <property type="protein sequence ID" value="C05B5.5a.2"/>
    <property type="gene ID" value="WBGene00007322"/>
</dbReference>
<dbReference type="GeneID" id="176413"/>
<dbReference type="KEGG" id="cel:CELE_C05B5.5"/>
<dbReference type="UCSC" id="C05B5.5">
    <property type="organism name" value="c. elegans"/>
</dbReference>
<dbReference type="AGR" id="WB:WBGene00007322"/>
<dbReference type="CTD" id="176413"/>
<dbReference type="WormBase" id="C05B5.5a">
    <property type="protein sequence ID" value="CE40686"/>
    <property type="gene ID" value="WBGene00007322"/>
</dbReference>
<dbReference type="eggNOG" id="KOG1225">
    <property type="taxonomic scope" value="Eukaryota"/>
</dbReference>
<dbReference type="HOGENOM" id="CLU_824487_0_0_1"/>
<dbReference type="InParanoid" id="P34293"/>
<dbReference type="OMA" id="LKPWDLF"/>
<dbReference type="OrthoDB" id="2322499at2759"/>
<dbReference type="PRO" id="PR:P34293"/>
<dbReference type="Proteomes" id="UP000001940">
    <property type="component" value="Chromosome III"/>
</dbReference>
<dbReference type="Bgee" id="WBGene00007322">
    <property type="expression patterns" value="Expressed in pharyngeal muscle cell (C elegans) and 2 other cell types or tissues"/>
</dbReference>
<dbReference type="CDD" id="cd09917">
    <property type="entry name" value="F-box_SF"/>
    <property type="match status" value="1"/>
</dbReference>
<dbReference type="InterPro" id="IPR001810">
    <property type="entry name" value="F-box_dom"/>
</dbReference>
<dbReference type="PANTHER" id="PTHR21503">
    <property type="entry name" value="F-BOX-CONTAINING HYPOTHETICAL PROTEIN C.ELEGANS"/>
    <property type="match status" value="1"/>
</dbReference>
<dbReference type="PANTHER" id="PTHR21503:SF17">
    <property type="entry name" value="PROTEIN CBG09922"/>
    <property type="match status" value="1"/>
</dbReference>
<dbReference type="Pfam" id="PF00646">
    <property type="entry name" value="F-box"/>
    <property type="match status" value="1"/>
</dbReference>
<dbReference type="PROSITE" id="PS50181">
    <property type="entry name" value="FBOX"/>
    <property type="match status" value="1"/>
</dbReference>
<name>YKO5_CAEEL</name>